<protein>
    <recommendedName>
        <fullName evidence="1">Aspartate--ammonia ligase</fullName>
        <ecNumber evidence="1">6.3.1.1</ecNumber>
    </recommendedName>
    <alternativeName>
        <fullName evidence="1">Asparagine synthetase A</fullName>
    </alternativeName>
</protein>
<accession>Q5FHY0</accession>
<name>ASNA_LACAC</name>
<comment type="catalytic activity">
    <reaction evidence="1">
        <text>L-aspartate + NH4(+) + ATP = L-asparagine + AMP + diphosphate + H(+)</text>
        <dbReference type="Rhea" id="RHEA:11372"/>
        <dbReference type="ChEBI" id="CHEBI:15378"/>
        <dbReference type="ChEBI" id="CHEBI:28938"/>
        <dbReference type="ChEBI" id="CHEBI:29991"/>
        <dbReference type="ChEBI" id="CHEBI:30616"/>
        <dbReference type="ChEBI" id="CHEBI:33019"/>
        <dbReference type="ChEBI" id="CHEBI:58048"/>
        <dbReference type="ChEBI" id="CHEBI:456215"/>
        <dbReference type="EC" id="6.3.1.1"/>
    </reaction>
</comment>
<comment type="pathway">
    <text evidence="1">Amino-acid biosynthesis; L-asparagine biosynthesis; L-asparagine from L-aspartate (ammonia route): step 1/1.</text>
</comment>
<comment type="subcellular location">
    <subcellularLocation>
        <location evidence="1">Cytoplasm</location>
    </subcellularLocation>
</comment>
<comment type="similarity">
    <text evidence="1">Belongs to the class-II aminoacyl-tRNA synthetase family. AsnA subfamily.</text>
</comment>
<feature type="chain" id="PRO_1000017950" description="Aspartate--ammonia ligase">
    <location>
        <begin position="1"/>
        <end position="336"/>
    </location>
</feature>
<evidence type="ECO:0000255" key="1">
    <source>
        <dbReference type="HAMAP-Rule" id="MF_00555"/>
    </source>
</evidence>
<organism>
    <name type="scientific">Lactobacillus acidophilus (strain ATCC 700396 / NCK56 / N2 / NCFM)</name>
    <dbReference type="NCBI Taxonomy" id="272621"/>
    <lineage>
        <taxon>Bacteria</taxon>
        <taxon>Bacillati</taxon>
        <taxon>Bacillota</taxon>
        <taxon>Bacilli</taxon>
        <taxon>Lactobacillales</taxon>
        <taxon>Lactobacillaceae</taxon>
        <taxon>Lactobacillus</taxon>
    </lineage>
</organism>
<proteinExistence type="inferred from homology"/>
<dbReference type="EC" id="6.3.1.1" evidence="1"/>
<dbReference type="EMBL" id="CP000033">
    <property type="protein sequence ID" value="AAV43694.1"/>
    <property type="molecule type" value="Genomic_DNA"/>
</dbReference>
<dbReference type="RefSeq" id="WP_003549578.1">
    <property type="nucleotide sequence ID" value="NC_006814.3"/>
</dbReference>
<dbReference type="RefSeq" id="YP_194725.1">
    <property type="nucleotide sequence ID" value="NC_006814.3"/>
</dbReference>
<dbReference type="SMR" id="Q5FHY0"/>
<dbReference type="STRING" id="272621.LBA1896"/>
<dbReference type="GeneID" id="93290967"/>
<dbReference type="KEGG" id="lac:LBA1896"/>
<dbReference type="PATRIC" id="fig|272621.13.peg.1801"/>
<dbReference type="eggNOG" id="COG2502">
    <property type="taxonomic scope" value="Bacteria"/>
</dbReference>
<dbReference type="HOGENOM" id="CLU_071543_0_0_9"/>
<dbReference type="OrthoDB" id="9766088at2"/>
<dbReference type="BioCyc" id="LACI272621:G1G49-1850-MONOMER"/>
<dbReference type="UniPathway" id="UPA00134">
    <property type="reaction ID" value="UER00194"/>
</dbReference>
<dbReference type="Proteomes" id="UP000006381">
    <property type="component" value="Chromosome"/>
</dbReference>
<dbReference type="GO" id="GO:0005829">
    <property type="term" value="C:cytosol"/>
    <property type="evidence" value="ECO:0007669"/>
    <property type="project" value="TreeGrafter"/>
</dbReference>
<dbReference type="GO" id="GO:0004071">
    <property type="term" value="F:aspartate-ammonia ligase activity"/>
    <property type="evidence" value="ECO:0007669"/>
    <property type="project" value="UniProtKB-UniRule"/>
</dbReference>
<dbReference type="GO" id="GO:0005524">
    <property type="term" value="F:ATP binding"/>
    <property type="evidence" value="ECO:0007669"/>
    <property type="project" value="UniProtKB-UniRule"/>
</dbReference>
<dbReference type="GO" id="GO:0140096">
    <property type="term" value="F:catalytic activity, acting on a protein"/>
    <property type="evidence" value="ECO:0007669"/>
    <property type="project" value="UniProtKB-ARBA"/>
</dbReference>
<dbReference type="GO" id="GO:0016740">
    <property type="term" value="F:transferase activity"/>
    <property type="evidence" value="ECO:0007669"/>
    <property type="project" value="UniProtKB-ARBA"/>
</dbReference>
<dbReference type="GO" id="GO:0070981">
    <property type="term" value="P:L-asparagine biosynthetic process"/>
    <property type="evidence" value="ECO:0007669"/>
    <property type="project" value="UniProtKB-UniRule"/>
</dbReference>
<dbReference type="CDD" id="cd00645">
    <property type="entry name" value="AsnA"/>
    <property type="match status" value="1"/>
</dbReference>
<dbReference type="Gene3D" id="3.30.930.10">
    <property type="entry name" value="Bira Bifunctional Protein, Domain 2"/>
    <property type="match status" value="1"/>
</dbReference>
<dbReference type="HAMAP" id="MF_00555">
    <property type="entry name" value="AsnA"/>
    <property type="match status" value="1"/>
</dbReference>
<dbReference type="InterPro" id="IPR006195">
    <property type="entry name" value="aa-tRNA-synth_II"/>
</dbReference>
<dbReference type="InterPro" id="IPR045864">
    <property type="entry name" value="aa-tRNA-synth_II/BPL/LPL"/>
</dbReference>
<dbReference type="InterPro" id="IPR004618">
    <property type="entry name" value="AsnA"/>
</dbReference>
<dbReference type="NCBIfam" id="TIGR00669">
    <property type="entry name" value="asnA"/>
    <property type="match status" value="1"/>
</dbReference>
<dbReference type="PANTHER" id="PTHR30073">
    <property type="entry name" value="ASPARTATE--AMMONIA LIGASE"/>
    <property type="match status" value="1"/>
</dbReference>
<dbReference type="PANTHER" id="PTHR30073:SF5">
    <property type="entry name" value="ASPARTATE--AMMONIA LIGASE"/>
    <property type="match status" value="1"/>
</dbReference>
<dbReference type="Pfam" id="PF03590">
    <property type="entry name" value="AsnA"/>
    <property type="match status" value="1"/>
</dbReference>
<dbReference type="PIRSF" id="PIRSF001555">
    <property type="entry name" value="Asp_ammon_ligase"/>
    <property type="match status" value="1"/>
</dbReference>
<dbReference type="SUPFAM" id="SSF55681">
    <property type="entry name" value="Class II aaRS and biotin synthetases"/>
    <property type="match status" value="1"/>
</dbReference>
<dbReference type="PROSITE" id="PS50862">
    <property type="entry name" value="AA_TRNA_LIGASE_II"/>
    <property type="match status" value="1"/>
</dbReference>
<keyword id="KW-0028">Amino-acid biosynthesis</keyword>
<keyword id="KW-0061">Asparagine biosynthesis</keyword>
<keyword id="KW-0067">ATP-binding</keyword>
<keyword id="KW-0963">Cytoplasm</keyword>
<keyword id="KW-0436">Ligase</keyword>
<keyword id="KW-0547">Nucleotide-binding</keyword>
<keyword id="KW-1185">Reference proteome</keyword>
<gene>
    <name evidence="1" type="primary">asnA</name>
    <name type="ordered locus">LBA1896</name>
</gene>
<reference key="1">
    <citation type="journal article" date="2005" name="Proc. Natl. Acad. Sci. U.S.A.">
        <title>Complete genome sequence of the probiotic lactic acid bacterium Lactobacillus acidophilus NCFM.</title>
        <authorList>
            <person name="Altermann E."/>
            <person name="Russell W.M."/>
            <person name="Azcarate-Peril M.A."/>
            <person name="Barrangou R."/>
            <person name="Buck B.L."/>
            <person name="McAuliffe O."/>
            <person name="Souther N."/>
            <person name="Dobson A."/>
            <person name="Duong T."/>
            <person name="Callanan M."/>
            <person name="Lick S."/>
            <person name="Hamrick A."/>
            <person name="Cano R."/>
            <person name="Klaenhammer T.R."/>
        </authorList>
    </citation>
    <scope>NUCLEOTIDE SEQUENCE [LARGE SCALE GENOMIC DNA]</scope>
    <source>
        <strain>ATCC 700396 / NCK56 / N2 / NCFM</strain>
    </source>
</reference>
<sequence length="336" mass="38744">MKLILPKDYHPTLTVRDTEAAIVYIRETFQDKLASILGVQRMSAPMFVEKASGLNDNLNGVERPVGFDMKAIPDSEIEVVHSLAKWKRLALKRYGFGMHEGLYTNMNAIRRDEDLDNFHSIYVDQWDWEKIIAKEERNTDTLEVTVMKIFKAIKATEKLVTARYPGSTYRLGDHVSFITTQELEDRWPELSPEERENKIAKEEKAVFIMKIGDKLKRSGKPHDGRAPDYDDWQLNGDLIFWYEPLQSKIEVSSMGIRVSEESLREQLKKAHCEDREKLPFHKMLLEGKLPYTIGGGIGQSRLCMLLLGKAHIGEVQASIWPEEMIEKCESDHIHLL</sequence>